<dbReference type="EC" id="2.1.-.-" evidence="1"/>
<dbReference type="EMBL" id="AE005674">
    <property type="protein sequence ID" value="AAN42665.2"/>
    <property type="molecule type" value="Genomic_DNA"/>
</dbReference>
<dbReference type="EMBL" id="AE014073">
    <property type="protein sequence ID" value="AAP16549.1"/>
    <property type="molecule type" value="Genomic_DNA"/>
</dbReference>
<dbReference type="RefSeq" id="NP_706958.2">
    <property type="nucleotide sequence ID" value="NC_004337.2"/>
</dbReference>
<dbReference type="RefSeq" id="WP_001070350.1">
    <property type="nucleotide sequence ID" value="NZ_WPGW01000143.1"/>
</dbReference>
<dbReference type="STRING" id="198214.SF1043"/>
<dbReference type="PaxDb" id="198214-SF1043"/>
<dbReference type="GeneID" id="1023988"/>
<dbReference type="GeneID" id="93776367"/>
<dbReference type="KEGG" id="sfl:SF1043"/>
<dbReference type="KEGG" id="sfx:S1117"/>
<dbReference type="PATRIC" id="fig|198214.7.peg.1215"/>
<dbReference type="HOGENOM" id="CLU_036182_2_0_6"/>
<dbReference type="UniPathway" id="UPA00637"/>
<dbReference type="Proteomes" id="UP000001006">
    <property type="component" value="Chromosome"/>
</dbReference>
<dbReference type="Proteomes" id="UP000002673">
    <property type="component" value="Chromosome"/>
</dbReference>
<dbReference type="GO" id="GO:0005886">
    <property type="term" value="C:plasma membrane"/>
    <property type="evidence" value="ECO:0007669"/>
    <property type="project" value="UniProtKB-SubCell"/>
</dbReference>
<dbReference type="GO" id="GO:0016747">
    <property type="term" value="F:acyltransferase activity, transferring groups other than amino-acyl groups"/>
    <property type="evidence" value="ECO:0007669"/>
    <property type="project" value="InterPro"/>
</dbReference>
<dbReference type="GO" id="GO:0016741">
    <property type="term" value="F:transferase activity, transferring one-carbon groups"/>
    <property type="evidence" value="ECO:0007669"/>
    <property type="project" value="UniProtKB-UniRule"/>
</dbReference>
<dbReference type="GO" id="GO:0009250">
    <property type="term" value="P:glucan biosynthetic process"/>
    <property type="evidence" value="ECO:0007669"/>
    <property type="project" value="UniProtKB-UniRule"/>
</dbReference>
<dbReference type="HAMAP" id="MF_01066">
    <property type="entry name" value="MdoC_OpgC"/>
    <property type="match status" value="1"/>
</dbReference>
<dbReference type="InterPro" id="IPR002656">
    <property type="entry name" value="Acyl_transf_3_dom"/>
</dbReference>
<dbReference type="InterPro" id="IPR050623">
    <property type="entry name" value="Glucan_succinyl_AcylTrfase"/>
</dbReference>
<dbReference type="InterPro" id="IPR023723">
    <property type="entry name" value="Glucans_biosynth_C"/>
</dbReference>
<dbReference type="NCBIfam" id="NF003014">
    <property type="entry name" value="PRK03854.1"/>
    <property type="match status" value="1"/>
</dbReference>
<dbReference type="PANTHER" id="PTHR36927">
    <property type="entry name" value="BLR4337 PROTEIN"/>
    <property type="match status" value="1"/>
</dbReference>
<dbReference type="PANTHER" id="PTHR36927:SF3">
    <property type="entry name" value="GLUCANS BIOSYNTHESIS PROTEIN C"/>
    <property type="match status" value="1"/>
</dbReference>
<dbReference type="Pfam" id="PF01757">
    <property type="entry name" value="Acyl_transf_3"/>
    <property type="match status" value="1"/>
</dbReference>
<protein>
    <recommendedName>
        <fullName evidence="1">Glucans biosynthesis protein C</fullName>
        <ecNumber evidence="1">2.1.-.-</ecNumber>
    </recommendedName>
</protein>
<gene>
    <name evidence="1" type="primary">mdoC</name>
    <name evidence="1" type="synonym">opgC</name>
    <name type="ordered locus">SF1043</name>
    <name type="ordered locus">S1117</name>
</gene>
<feature type="chain" id="PRO_0000218056" description="Glucans biosynthesis protein C">
    <location>
        <begin position="1"/>
        <end position="385"/>
    </location>
</feature>
<feature type="transmembrane region" description="Helical" evidence="1">
    <location>
        <begin position="17"/>
        <end position="39"/>
    </location>
</feature>
<feature type="transmembrane region" description="Helical" evidence="1">
    <location>
        <begin position="54"/>
        <end position="76"/>
    </location>
</feature>
<feature type="transmembrane region" description="Helical" evidence="1">
    <location>
        <begin position="88"/>
        <end position="110"/>
    </location>
</feature>
<feature type="transmembrane region" description="Helical" evidence="1">
    <location>
        <begin position="136"/>
        <end position="158"/>
    </location>
</feature>
<feature type="transmembrane region" description="Helical" evidence="1">
    <location>
        <begin position="179"/>
        <end position="198"/>
    </location>
</feature>
<feature type="transmembrane region" description="Helical" evidence="1">
    <location>
        <begin position="213"/>
        <end position="235"/>
    </location>
</feature>
<feature type="transmembrane region" description="Helical" evidence="1">
    <location>
        <begin position="242"/>
        <end position="261"/>
    </location>
</feature>
<feature type="transmembrane region" description="Helical" evidence="1">
    <location>
        <begin position="276"/>
        <end position="295"/>
    </location>
</feature>
<feature type="transmembrane region" description="Helical" evidence="1">
    <location>
        <begin position="308"/>
        <end position="330"/>
    </location>
</feature>
<feature type="transmembrane region" description="Helical" evidence="1">
    <location>
        <begin position="334"/>
        <end position="356"/>
    </location>
</feature>
<name>OPGC_SHIFL</name>
<sequence>MNPVPAQREYFLDSIRAWLMLLGIPFHISLIYSSHTWHVNSAEPSLWLTLFNDFIHSFRMQVFFVISGYFSYMLFLRYPLKKWWKVRVERVGIPMLTAIPLLTLPQFIMLQYVKGKAESWPGLSLYDKYNTLAWELISHLWFLLVLVVMTTLCVWIFKRIRNNLENSDKTNKKFSMVKLSVIFLCLGIGYAVIRRTIFIVYPPILSNGMFNFIVMQTLFYLPFFILGALAFIFPHLKALFTTPSRGCTLAAALAFVAYLLNQRYGSGDAWMYETESVITMVLGLWMVNVVFSFGHRLLNFQSARVTYFVNASLFIYLVHHPLTLFFGAYITPHITSNWLGFLCGLIFVVGIAIILYEIHLRIPLLKFLFSGKPVVKRENDKAPAR</sequence>
<organism>
    <name type="scientific">Shigella flexneri</name>
    <dbReference type="NCBI Taxonomy" id="623"/>
    <lineage>
        <taxon>Bacteria</taxon>
        <taxon>Pseudomonadati</taxon>
        <taxon>Pseudomonadota</taxon>
        <taxon>Gammaproteobacteria</taxon>
        <taxon>Enterobacterales</taxon>
        <taxon>Enterobacteriaceae</taxon>
        <taxon>Shigella</taxon>
    </lineage>
</organism>
<accession>P67560</accession>
<accession>Q83RU4</accession>
<accession>Q8FIS5</accession>
<comment type="function">
    <text evidence="1">Necessary for the succinyl substitution of periplasmic glucans. Could catalyze the transfer of succinyl residues from the cytoplasmic side of the membrane to the nascent glucan backbones on the periplasmic side of the membrane.</text>
</comment>
<comment type="pathway">
    <text evidence="1">Glycan metabolism; osmoregulated periplasmic glucan (OPG) biosynthesis.</text>
</comment>
<comment type="subcellular location">
    <subcellularLocation>
        <location evidence="1">Cell membrane</location>
        <topology evidence="1">Multi-pass membrane protein</topology>
    </subcellularLocation>
</comment>
<comment type="similarity">
    <text evidence="1">Belongs to the acyltransferase 3 family. OpgC subfamily.</text>
</comment>
<proteinExistence type="inferred from homology"/>
<keyword id="KW-0012">Acyltransferase</keyword>
<keyword id="KW-1003">Cell membrane</keyword>
<keyword id="KW-0472">Membrane</keyword>
<keyword id="KW-1185">Reference proteome</keyword>
<keyword id="KW-0808">Transferase</keyword>
<keyword id="KW-0812">Transmembrane</keyword>
<keyword id="KW-1133">Transmembrane helix</keyword>
<reference key="1">
    <citation type="journal article" date="2002" name="Nucleic Acids Res.">
        <title>Genome sequence of Shigella flexneri 2a: insights into pathogenicity through comparison with genomes of Escherichia coli K12 and O157.</title>
        <authorList>
            <person name="Jin Q."/>
            <person name="Yuan Z."/>
            <person name="Xu J."/>
            <person name="Wang Y."/>
            <person name="Shen Y."/>
            <person name="Lu W."/>
            <person name="Wang J."/>
            <person name="Liu H."/>
            <person name="Yang J."/>
            <person name="Yang F."/>
            <person name="Zhang X."/>
            <person name="Zhang J."/>
            <person name="Yang G."/>
            <person name="Wu H."/>
            <person name="Qu D."/>
            <person name="Dong J."/>
            <person name="Sun L."/>
            <person name="Xue Y."/>
            <person name="Zhao A."/>
            <person name="Gao Y."/>
            <person name="Zhu J."/>
            <person name="Kan B."/>
            <person name="Ding K."/>
            <person name="Chen S."/>
            <person name="Cheng H."/>
            <person name="Yao Z."/>
            <person name="He B."/>
            <person name="Chen R."/>
            <person name="Ma D."/>
            <person name="Qiang B."/>
            <person name="Wen Y."/>
            <person name="Hou Y."/>
            <person name="Yu J."/>
        </authorList>
    </citation>
    <scope>NUCLEOTIDE SEQUENCE [LARGE SCALE GENOMIC DNA]</scope>
    <source>
        <strain>301 / Serotype 2a</strain>
    </source>
</reference>
<reference key="2">
    <citation type="journal article" date="2003" name="Infect. Immun.">
        <title>Complete genome sequence and comparative genomics of Shigella flexneri serotype 2a strain 2457T.</title>
        <authorList>
            <person name="Wei J."/>
            <person name="Goldberg M.B."/>
            <person name="Burland V."/>
            <person name="Venkatesan M.M."/>
            <person name="Deng W."/>
            <person name="Fournier G."/>
            <person name="Mayhew G.F."/>
            <person name="Plunkett G. III"/>
            <person name="Rose D.J."/>
            <person name="Darling A."/>
            <person name="Mau B."/>
            <person name="Perna N.T."/>
            <person name="Payne S.M."/>
            <person name="Runyen-Janecky L.J."/>
            <person name="Zhou S."/>
            <person name="Schwartz D.C."/>
            <person name="Blattner F.R."/>
        </authorList>
    </citation>
    <scope>NUCLEOTIDE SEQUENCE [LARGE SCALE GENOMIC DNA]</scope>
    <source>
        <strain>ATCC 700930 / 2457T / Serotype 2a</strain>
    </source>
</reference>
<evidence type="ECO:0000255" key="1">
    <source>
        <dbReference type="HAMAP-Rule" id="MF_01066"/>
    </source>
</evidence>